<protein>
    <recommendedName>
        <fullName>Putative (R)-citramalate synthase CimA</fullName>
        <ecNumber>2.3.3.21</ecNumber>
    </recommendedName>
</protein>
<dbReference type="EC" id="2.3.3.21"/>
<dbReference type="EMBL" id="AE000782">
    <property type="protein sequence ID" value="AAB90286.1"/>
    <property type="molecule type" value="Genomic_DNA"/>
</dbReference>
<dbReference type="PIR" id="E69369">
    <property type="entry name" value="E69369"/>
</dbReference>
<dbReference type="RefSeq" id="WP_010878457.1">
    <property type="nucleotide sequence ID" value="NC_000917.1"/>
</dbReference>
<dbReference type="SMR" id="O29305"/>
<dbReference type="STRING" id="224325.AF_0957"/>
<dbReference type="PaxDb" id="224325-AF_0957"/>
<dbReference type="EnsemblBacteria" id="AAB90286">
    <property type="protein sequence ID" value="AAB90286"/>
    <property type="gene ID" value="AF_0957"/>
</dbReference>
<dbReference type="KEGG" id="afu:AF_0957"/>
<dbReference type="eggNOG" id="arCOG02092">
    <property type="taxonomic scope" value="Archaea"/>
</dbReference>
<dbReference type="HOGENOM" id="CLU_022158_0_1_2"/>
<dbReference type="OrthoDB" id="6555at2157"/>
<dbReference type="PhylomeDB" id="O29305"/>
<dbReference type="UniPathway" id="UPA00047">
    <property type="reaction ID" value="UER00066"/>
</dbReference>
<dbReference type="Proteomes" id="UP000002199">
    <property type="component" value="Chromosome"/>
</dbReference>
<dbReference type="GO" id="GO:0043714">
    <property type="term" value="F:(R)-citramalate synthase activity"/>
    <property type="evidence" value="ECO:0007669"/>
    <property type="project" value="InterPro"/>
</dbReference>
<dbReference type="GO" id="GO:0003852">
    <property type="term" value="F:2-isopropylmalate synthase activity"/>
    <property type="evidence" value="ECO:0007669"/>
    <property type="project" value="InterPro"/>
</dbReference>
<dbReference type="GO" id="GO:0009097">
    <property type="term" value="P:isoleucine biosynthetic process"/>
    <property type="evidence" value="ECO:0007669"/>
    <property type="project" value="UniProtKB-UniRule"/>
</dbReference>
<dbReference type="GO" id="GO:0009098">
    <property type="term" value="P:L-leucine biosynthetic process"/>
    <property type="evidence" value="ECO:0007669"/>
    <property type="project" value="InterPro"/>
</dbReference>
<dbReference type="CDD" id="cd07940">
    <property type="entry name" value="DRE_TIM_IPMS"/>
    <property type="match status" value="1"/>
</dbReference>
<dbReference type="FunFam" id="1.10.238.260:FF:000001">
    <property type="entry name" value="2-isopropylmalate synthase"/>
    <property type="match status" value="1"/>
</dbReference>
<dbReference type="FunFam" id="3.20.20.70:FF:000010">
    <property type="entry name" value="2-isopropylmalate synthase"/>
    <property type="match status" value="1"/>
</dbReference>
<dbReference type="FunFam" id="3.30.160.270:FF:000003">
    <property type="entry name" value="2-isopropylmalate synthase"/>
    <property type="match status" value="1"/>
</dbReference>
<dbReference type="Gene3D" id="1.10.238.260">
    <property type="match status" value="1"/>
</dbReference>
<dbReference type="Gene3D" id="3.30.160.270">
    <property type="match status" value="1"/>
</dbReference>
<dbReference type="Gene3D" id="3.20.20.70">
    <property type="entry name" value="Aldolase class I"/>
    <property type="match status" value="1"/>
</dbReference>
<dbReference type="HAMAP" id="MF_01028">
    <property type="entry name" value="CimA"/>
    <property type="match status" value="1"/>
</dbReference>
<dbReference type="InterPro" id="IPR013709">
    <property type="entry name" value="2-isopropylmalate_synth_dimer"/>
</dbReference>
<dbReference type="InterPro" id="IPR002034">
    <property type="entry name" value="AIPM/Hcit_synth_CS"/>
</dbReference>
<dbReference type="InterPro" id="IPR013785">
    <property type="entry name" value="Aldolase_TIM"/>
</dbReference>
<dbReference type="InterPro" id="IPR024890">
    <property type="entry name" value="Citramalate_synthase_CimA"/>
</dbReference>
<dbReference type="InterPro" id="IPR011830">
    <property type="entry name" value="LEU1_arch"/>
</dbReference>
<dbReference type="InterPro" id="IPR054691">
    <property type="entry name" value="LeuA/HCS_post-cat"/>
</dbReference>
<dbReference type="InterPro" id="IPR036230">
    <property type="entry name" value="LeuA_allosteric_dom_sf"/>
</dbReference>
<dbReference type="InterPro" id="IPR000891">
    <property type="entry name" value="PYR_CT"/>
</dbReference>
<dbReference type="NCBIfam" id="TIGR02090">
    <property type="entry name" value="LEU1_arch"/>
    <property type="match status" value="1"/>
</dbReference>
<dbReference type="NCBIfam" id="NF002085">
    <property type="entry name" value="PRK00915.1-2"/>
    <property type="match status" value="1"/>
</dbReference>
<dbReference type="PANTHER" id="PTHR42880:SF2">
    <property type="entry name" value="(R)-CITRAMALATE SYNTHASE CIMA"/>
    <property type="match status" value="1"/>
</dbReference>
<dbReference type="PANTHER" id="PTHR42880">
    <property type="entry name" value="HOMOCITRATE SYNTHASE"/>
    <property type="match status" value="1"/>
</dbReference>
<dbReference type="Pfam" id="PF22617">
    <property type="entry name" value="HCS_D2"/>
    <property type="match status" value="1"/>
</dbReference>
<dbReference type="Pfam" id="PF00682">
    <property type="entry name" value="HMGL-like"/>
    <property type="match status" value="1"/>
</dbReference>
<dbReference type="Pfam" id="PF08502">
    <property type="entry name" value="LeuA_dimer"/>
    <property type="match status" value="1"/>
</dbReference>
<dbReference type="SMART" id="SM00917">
    <property type="entry name" value="LeuA_dimer"/>
    <property type="match status" value="1"/>
</dbReference>
<dbReference type="SUPFAM" id="SSF110921">
    <property type="entry name" value="2-isopropylmalate synthase LeuA, allosteric (dimerisation) domain"/>
    <property type="match status" value="1"/>
</dbReference>
<dbReference type="SUPFAM" id="SSF51569">
    <property type="entry name" value="Aldolase"/>
    <property type="match status" value="1"/>
</dbReference>
<dbReference type="PROSITE" id="PS00815">
    <property type="entry name" value="AIPM_HOMOCIT_SYNTH_1"/>
    <property type="match status" value="1"/>
</dbReference>
<dbReference type="PROSITE" id="PS00816">
    <property type="entry name" value="AIPM_HOMOCIT_SYNTH_2"/>
    <property type="match status" value="1"/>
</dbReference>
<dbReference type="PROSITE" id="PS50991">
    <property type="entry name" value="PYR_CT"/>
    <property type="match status" value="1"/>
</dbReference>
<keyword id="KW-0028">Amino-acid biosynthesis</keyword>
<keyword id="KW-0100">Branched-chain amino acid biosynthesis</keyword>
<keyword id="KW-0412">Isoleucine biosynthesis</keyword>
<keyword id="KW-1185">Reference proteome</keyword>
<keyword id="KW-0808">Transferase</keyword>
<comment type="function">
    <text evidence="1">Catalyzes the condensation of pyruvate and acetyl-coenzyme A to form (R)-citramalate.</text>
</comment>
<comment type="catalytic activity">
    <reaction>
        <text>pyruvate + acetyl-CoA + H2O = (3R)-citramalate + CoA + H(+)</text>
        <dbReference type="Rhea" id="RHEA:19045"/>
        <dbReference type="ChEBI" id="CHEBI:15361"/>
        <dbReference type="ChEBI" id="CHEBI:15377"/>
        <dbReference type="ChEBI" id="CHEBI:15378"/>
        <dbReference type="ChEBI" id="CHEBI:30934"/>
        <dbReference type="ChEBI" id="CHEBI:57287"/>
        <dbReference type="ChEBI" id="CHEBI:57288"/>
        <dbReference type="EC" id="2.3.3.21"/>
    </reaction>
</comment>
<comment type="pathway">
    <text>Amino-acid biosynthesis; L-isoleucine biosynthesis; 2-oxobutanoate from pyruvate: step 1/3.</text>
</comment>
<comment type="subunit">
    <text evidence="1">Homodimer.</text>
</comment>
<comment type="similarity">
    <text evidence="3">Belongs to the alpha-IPM synthase/homocitrate synthase family.</text>
</comment>
<name>CIMA_ARCFU</name>
<sequence>MQVKILDTTLRDGEQTPGVSLSVEQKVMIAEALDNLGVDIIEAGTAIASEGDFQAIKEISQRGLNAEICSFARIKREDIDAAADAGAESIFMVAPSSDIHINAKFPGKDRDYVIEKSVEAIEYAKERGLIVEFGAEDASRADLDFVIQLFKRAEEAKADRITFADTVGVLSPEKMEEIVRKIKAKVKLPLAIHCHDDFGLATANTIFGIKAGAEEFHGTINGLGERAGNAAIEEVVIALEYLYGIKTKIKKERLYNTSKLVEKLSRVVVPPNKPIVGDNAFTHESGIHTSALFRDAKSYEPISPEVVGRKRVIVLGKHAGRASVEAIMNELGYKATPEQMKEILARIKEIGDKGKRVTDADVRTIIETVLQIKREKKVKLEDLAIFSGKNVMPMASVKLKIDGQERIEAAVGLGPVDAAINAIRRAIKEFADIKLVSYHVDAITGGTDALVDVVVQLKKDNKIVTARGARTDIIMASVEAFIEGINMLF</sequence>
<gene>
    <name type="primary">cimA</name>
    <name type="ordered locus">AF_0957</name>
</gene>
<evidence type="ECO:0000250" key="1"/>
<evidence type="ECO:0000255" key="2">
    <source>
        <dbReference type="PROSITE-ProRule" id="PRU01151"/>
    </source>
</evidence>
<evidence type="ECO:0000305" key="3"/>
<proteinExistence type="inferred from homology"/>
<reference key="1">
    <citation type="journal article" date="1997" name="Nature">
        <title>The complete genome sequence of the hyperthermophilic, sulphate-reducing archaeon Archaeoglobus fulgidus.</title>
        <authorList>
            <person name="Klenk H.-P."/>
            <person name="Clayton R.A."/>
            <person name="Tomb J.-F."/>
            <person name="White O."/>
            <person name="Nelson K.E."/>
            <person name="Ketchum K.A."/>
            <person name="Dodson R.J."/>
            <person name="Gwinn M.L."/>
            <person name="Hickey E.K."/>
            <person name="Peterson J.D."/>
            <person name="Richardson D.L."/>
            <person name="Kerlavage A.R."/>
            <person name="Graham D.E."/>
            <person name="Kyrpides N.C."/>
            <person name="Fleischmann R.D."/>
            <person name="Quackenbush J."/>
            <person name="Lee N.H."/>
            <person name="Sutton G.G."/>
            <person name="Gill S.R."/>
            <person name="Kirkness E.F."/>
            <person name="Dougherty B.A."/>
            <person name="McKenney K."/>
            <person name="Adams M.D."/>
            <person name="Loftus B.J."/>
            <person name="Peterson S.N."/>
            <person name="Reich C.I."/>
            <person name="McNeil L.K."/>
            <person name="Badger J.H."/>
            <person name="Glodek A."/>
            <person name="Zhou L."/>
            <person name="Overbeek R."/>
            <person name="Gocayne J.D."/>
            <person name="Weidman J.F."/>
            <person name="McDonald L.A."/>
            <person name="Utterback T.R."/>
            <person name="Cotton M.D."/>
            <person name="Spriggs T."/>
            <person name="Artiach P."/>
            <person name="Kaine B.P."/>
            <person name="Sykes S.M."/>
            <person name="Sadow P.W."/>
            <person name="D'Andrea K.P."/>
            <person name="Bowman C."/>
            <person name="Fujii C."/>
            <person name="Garland S.A."/>
            <person name="Mason T.M."/>
            <person name="Olsen G.J."/>
            <person name="Fraser C.M."/>
            <person name="Smith H.O."/>
            <person name="Woese C.R."/>
            <person name="Venter J.C."/>
        </authorList>
    </citation>
    <scope>NUCLEOTIDE SEQUENCE [LARGE SCALE GENOMIC DNA]</scope>
    <source>
        <strain>ATCC 49558 / DSM 4304 / JCM 9628 / NBRC 100126 / VC-16</strain>
    </source>
</reference>
<organism>
    <name type="scientific">Archaeoglobus fulgidus (strain ATCC 49558 / DSM 4304 / JCM 9628 / NBRC 100126 / VC-16)</name>
    <dbReference type="NCBI Taxonomy" id="224325"/>
    <lineage>
        <taxon>Archaea</taxon>
        <taxon>Methanobacteriati</taxon>
        <taxon>Methanobacteriota</taxon>
        <taxon>Archaeoglobi</taxon>
        <taxon>Archaeoglobales</taxon>
        <taxon>Archaeoglobaceae</taxon>
        <taxon>Archaeoglobus</taxon>
    </lineage>
</organism>
<feature type="chain" id="PRO_0000140406" description="Putative (R)-citramalate synthase CimA">
    <location>
        <begin position="1"/>
        <end position="489"/>
    </location>
</feature>
<feature type="domain" description="Pyruvate carboxyltransferase" evidence="2">
    <location>
        <begin position="3"/>
        <end position="255"/>
    </location>
</feature>
<accession>O29305</accession>